<dbReference type="EMBL" id="AY007595">
    <property type="protein sequence ID" value="AAG28930.1"/>
    <property type="molecule type" value="Genomic_DNA"/>
</dbReference>
<dbReference type="EMBL" id="AL031346">
    <property type="status" value="NOT_ANNOTATED_CDS"/>
    <property type="molecule type" value="Genomic_DNA"/>
</dbReference>
<dbReference type="EMBL" id="BX247885">
    <property type="status" value="NOT_ANNOTATED_CDS"/>
    <property type="molecule type" value="Genomic_DNA"/>
</dbReference>
<dbReference type="EMBL" id="CH471095">
    <property type="protein sequence ID" value="EAW60495.1"/>
    <property type="molecule type" value="Genomic_DNA"/>
</dbReference>
<dbReference type="EMBL" id="AB006630">
    <property type="protein sequence ID" value="BAA22961.1"/>
    <property type="molecule type" value="mRNA"/>
</dbReference>
<dbReference type="EMBL" id="U19345">
    <property type="protein sequence ID" value="AAC36392.1"/>
    <property type="status" value="ALT_FRAME"/>
    <property type="molecule type" value="mRNA"/>
</dbReference>
<dbReference type="CCDS" id="CCDS14032.1">
    <molecule id="Q9UGU0-2"/>
</dbReference>
<dbReference type="CCDS" id="CCDS14033.1">
    <molecule id="Q9UGU0-1"/>
</dbReference>
<dbReference type="RefSeq" id="NP_001365347.1">
    <molecule id="Q9UGU0-1"/>
    <property type="nucleotide sequence ID" value="NM_001378418.1"/>
</dbReference>
<dbReference type="RefSeq" id="NP_005641.1">
    <molecule id="Q9UGU0-1"/>
    <property type="nucleotide sequence ID" value="NM_005650.4"/>
</dbReference>
<dbReference type="RefSeq" id="NP_852469.1">
    <molecule id="Q9UGU0-2"/>
    <property type="nucleotide sequence ID" value="NM_181492.3"/>
</dbReference>
<dbReference type="RefSeq" id="XP_005261779.1">
    <molecule id="Q9UGU0-1"/>
    <property type="nucleotide sequence ID" value="XM_005261722.4"/>
</dbReference>
<dbReference type="RefSeq" id="XP_006724376.1">
    <property type="nucleotide sequence ID" value="XM_006724313.3"/>
</dbReference>
<dbReference type="RefSeq" id="XP_011528656.1">
    <property type="nucleotide sequence ID" value="XM_011530354.2"/>
</dbReference>
<dbReference type="RefSeq" id="XP_047297430.1">
    <molecule id="Q9UGU0-1"/>
    <property type="nucleotide sequence ID" value="XM_047441474.1"/>
</dbReference>
<dbReference type="RefSeq" id="XP_047297431.1">
    <molecule id="Q9UGU0-1"/>
    <property type="nucleotide sequence ID" value="XM_047441475.1"/>
</dbReference>
<dbReference type="RefSeq" id="XP_047297432.1">
    <molecule id="Q9UGU0-2"/>
    <property type="nucleotide sequence ID" value="XM_047441476.1"/>
</dbReference>
<dbReference type="RefSeq" id="XP_047297433.1">
    <molecule id="Q9UGU0-2"/>
    <property type="nucleotide sequence ID" value="XM_047441477.1"/>
</dbReference>
<dbReference type="RefSeq" id="XP_047297434.1">
    <molecule id="Q9UGU0-2"/>
    <property type="nucleotide sequence ID" value="XM_047441478.1"/>
</dbReference>
<dbReference type="RefSeq" id="XP_054181856.1">
    <molecule id="Q9UGU0-1"/>
    <property type="nucleotide sequence ID" value="XM_054325881.1"/>
</dbReference>
<dbReference type="RefSeq" id="XP_054181857.1">
    <molecule id="Q9UGU0-1"/>
    <property type="nucleotide sequence ID" value="XM_054325882.1"/>
</dbReference>
<dbReference type="RefSeq" id="XP_054181858.1">
    <molecule id="Q9UGU0-1"/>
    <property type="nucleotide sequence ID" value="XM_054325883.1"/>
</dbReference>
<dbReference type="RefSeq" id="XP_054181860.1">
    <molecule id="Q9UGU0-2"/>
    <property type="nucleotide sequence ID" value="XM_054325885.1"/>
</dbReference>
<dbReference type="RefSeq" id="XP_054181861.1">
    <molecule id="Q9UGU0-2"/>
    <property type="nucleotide sequence ID" value="XM_054325886.1"/>
</dbReference>
<dbReference type="RefSeq" id="XP_054181862.1">
    <molecule id="Q9UGU0-2"/>
    <property type="nucleotide sequence ID" value="XM_054325887.1"/>
</dbReference>
<dbReference type="SMR" id="Q9UGU0"/>
<dbReference type="BioGRID" id="112802">
    <property type="interactions" value="147"/>
</dbReference>
<dbReference type="FunCoup" id="Q9UGU0">
    <property type="interactions" value="2276"/>
</dbReference>
<dbReference type="IntAct" id="Q9UGU0">
    <property type="interactions" value="81"/>
</dbReference>
<dbReference type="MINT" id="Q9UGU0"/>
<dbReference type="STRING" id="9606.ENSP00000352463"/>
<dbReference type="GlyCosmos" id="Q9UGU0">
    <property type="glycosylation" value="15 sites, 2 glycans"/>
</dbReference>
<dbReference type="GlyGen" id="Q9UGU0">
    <property type="glycosylation" value="26 sites, 2 O-linked glycans (25 sites)"/>
</dbReference>
<dbReference type="iPTMnet" id="Q9UGU0"/>
<dbReference type="PhosphoSitePlus" id="Q9UGU0"/>
<dbReference type="SwissPalm" id="Q9UGU0"/>
<dbReference type="BioMuta" id="TCF20"/>
<dbReference type="DMDM" id="92090378"/>
<dbReference type="jPOST" id="Q9UGU0"/>
<dbReference type="MassIVE" id="Q9UGU0"/>
<dbReference type="PaxDb" id="9606-ENSP00000352463"/>
<dbReference type="PeptideAtlas" id="Q9UGU0"/>
<dbReference type="ProteomicsDB" id="84264">
    <molecule id="Q9UGU0-1"/>
</dbReference>
<dbReference type="ProteomicsDB" id="84265">
    <molecule id="Q9UGU0-2"/>
</dbReference>
<dbReference type="Pumba" id="Q9UGU0"/>
<dbReference type="Antibodypedia" id="57349">
    <property type="antibodies" value="65 antibodies from 14 providers"/>
</dbReference>
<dbReference type="DNASU" id="6942"/>
<dbReference type="Ensembl" id="ENST00000335626.8">
    <molecule id="Q9UGU0-2"/>
    <property type="protein sequence ID" value="ENSP00000335561.4"/>
    <property type="gene ID" value="ENSG00000100207.21"/>
</dbReference>
<dbReference type="Ensembl" id="ENST00000359486.8">
    <molecule id="Q9UGU0-1"/>
    <property type="protein sequence ID" value="ENSP00000352463.3"/>
    <property type="gene ID" value="ENSG00000100207.21"/>
</dbReference>
<dbReference type="Ensembl" id="ENST00000574943.5">
    <molecule id="Q9UGU0-1"/>
    <property type="protein sequence ID" value="ENSP00000460328.1"/>
    <property type="gene ID" value="ENSG00000262024.6"/>
</dbReference>
<dbReference type="Ensembl" id="ENST00000576946.5">
    <molecule id="Q9UGU0-2"/>
    <property type="protein sequence ID" value="ENSP00000460587.1"/>
    <property type="gene ID" value="ENSG00000262024.6"/>
</dbReference>
<dbReference type="Ensembl" id="ENST00000619505.3">
    <molecule id="Q9UGU0-2"/>
    <property type="protein sequence ID" value="ENSP00000478503.2"/>
    <property type="gene ID" value="ENSG00000276461.4"/>
</dbReference>
<dbReference type="Ensembl" id="ENST00000621408.4">
    <molecule id="Q9UGU0-1"/>
    <property type="protein sequence ID" value="ENSP00000483199.1"/>
    <property type="gene ID" value="ENSG00000276461.4"/>
</dbReference>
<dbReference type="Ensembl" id="ENST00000677622.1">
    <molecule id="Q9UGU0-1"/>
    <property type="protein sequence ID" value="ENSP00000503828.1"/>
    <property type="gene ID" value="ENSG00000100207.21"/>
</dbReference>
<dbReference type="Ensembl" id="ENST00000683686.1">
    <molecule id="Q9UGU0-1"/>
    <property type="protein sequence ID" value="ENSP00000508272.1"/>
    <property type="gene ID" value="ENSG00000100207.21"/>
</dbReference>
<dbReference type="GeneID" id="6942"/>
<dbReference type="KEGG" id="hsa:6942"/>
<dbReference type="MANE-Select" id="ENST00000677622.1">
    <property type="protein sequence ID" value="ENSP00000503828.1"/>
    <property type="RefSeq nucleotide sequence ID" value="NM_001378418.1"/>
    <property type="RefSeq protein sequence ID" value="NP_001365347.1"/>
</dbReference>
<dbReference type="UCSC" id="uc003bck.3">
    <molecule id="Q9UGU0-1"/>
    <property type="organism name" value="human"/>
</dbReference>
<dbReference type="AGR" id="HGNC:11631"/>
<dbReference type="CTD" id="6942"/>
<dbReference type="DisGeNET" id="6942"/>
<dbReference type="GeneCards" id="TCF20"/>
<dbReference type="HGNC" id="HGNC:11631">
    <property type="gene designation" value="TCF20"/>
</dbReference>
<dbReference type="HPA" id="ENSG00000100207">
    <property type="expression patterns" value="Low tissue specificity"/>
</dbReference>
<dbReference type="MalaCards" id="TCF20"/>
<dbReference type="MIM" id="603107">
    <property type="type" value="gene"/>
</dbReference>
<dbReference type="MIM" id="618430">
    <property type="type" value="phenotype"/>
</dbReference>
<dbReference type="neXtProt" id="NX_Q9UGU0"/>
<dbReference type="OpenTargets" id="ENSG00000100207"/>
<dbReference type="Orphanet" id="528084">
    <property type="disease" value="Non-specific syndromic intellectual disability"/>
</dbReference>
<dbReference type="PharmGKB" id="PA36386"/>
<dbReference type="VEuPathDB" id="HostDB:ENSG00000100207"/>
<dbReference type="eggNOG" id="KOG1084">
    <property type="taxonomic scope" value="Eukaryota"/>
</dbReference>
<dbReference type="GeneTree" id="ENSGT00940000157896"/>
<dbReference type="HOGENOM" id="CLU_234705_0_0_1"/>
<dbReference type="InParanoid" id="Q9UGU0"/>
<dbReference type="OMA" id="GHMLNRQ"/>
<dbReference type="OrthoDB" id="10029243at2759"/>
<dbReference type="PAN-GO" id="Q9UGU0">
    <property type="GO annotations" value="2 GO annotations based on evolutionary models"/>
</dbReference>
<dbReference type="PhylomeDB" id="Q9UGU0"/>
<dbReference type="TreeFam" id="TF331317"/>
<dbReference type="PathwayCommons" id="Q9UGU0"/>
<dbReference type="SignaLink" id="Q9UGU0"/>
<dbReference type="SIGNOR" id="Q9UGU0"/>
<dbReference type="BioGRID-ORCS" id="6942">
    <property type="hits" value="11 hits in 1157 CRISPR screens"/>
</dbReference>
<dbReference type="ChiTaRS" id="TCF20">
    <property type="organism name" value="human"/>
</dbReference>
<dbReference type="GeneWiki" id="TCF20"/>
<dbReference type="GenomeRNAi" id="6942"/>
<dbReference type="Pharos" id="Q9UGU0">
    <property type="development level" value="Tbio"/>
</dbReference>
<dbReference type="PRO" id="PR:Q9UGU0"/>
<dbReference type="Proteomes" id="UP000005640">
    <property type="component" value="Chromosome 22"/>
</dbReference>
<dbReference type="RNAct" id="Q9UGU0">
    <property type="molecule type" value="protein"/>
</dbReference>
<dbReference type="Bgee" id="ENSG00000100207">
    <property type="expression patterns" value="Expressed in cortical plate and 109 other cell types or tissues"/>
</dbReference>
<dbReference type="ExpressionAtlas" id="Q9UGU0">
    <property type="expression patterns" value="baseline and differential"/>
</dbReference>
<dbReference type="GO" id="GO:0016604">
    <property type="term" value="C:nuclear body"/>
    <property type="evidence" value="ECO:0000314"/>
    <property type="project" value="HPA"/>
</dbReference>
<dbReference type="GO" id="GO:0005654">
    <property type="term" value="C:nucleoplasm"/>
    <property type="evidence" value="ECO:0000314"/>
    <property type="project" value="HPA"/>
</dbReference>
<dbReference type="GO" id="GO:0005634">
    <property type="term" value="C:nucleus"/>
    <property type="evidence" value="ECO:0000314"/>
    <property type="project" value="ARUK-UCL"/>
</dbReference>
<dbReference type="GO" id="GO:0003677">
    <property type="term" value="F:DNA binding"/>
    <property type="evidence" value="ECO:0007669"/>
    <property type="project" value="UniProtKB-KW"/>
</dbReference>
<dbReference type="GO" id="GO:0003723">
    <property type="term" value="F:RNA binding"/>
    <property type="evidence" value="ECO:0007005"/>
    <property type="project" value="UniProtKB"/>
</dbReference>
<dbReference type="GO" id="GO:0008270">
    <property type="term" value="F:zinc ion binding"/>
    <property type="evidence" value="ECO:0007669"/>
    <property type="project" value="UniProtKB-KW"/>
</dbReference>
<dbReference type="GO" id="GO:0045944">
    <property type="term" value="P:positive regulation of transcription by RNA polymerase II"/>
    <property type="evidence" value="ECO:0000303"/>
    <property type="project" value="GO_Central"/>
</dbReference>
<dbReference type="GO" id="GO:0006357">
    <property type="term" value="P:regulation of transcription by RNA polymerase II"/>
    <property type="evidence" value="ECO:0000318"/>
    <property type="project" value="GO_Central"/>
</dbReference>
<dbReference type="CDD" id="cd15699">
    <property type="entry name" value="ePHD_TCF20"/>
    <property type="match status" value="1"/>
</dbReference>
<dbReference type="FunFam" id="3.30.40.10:FF:000116">
    <property type="entry name" value="Transcription factor 20 (AR1)"/>
    <property type="match status" value="1"/>
</dbReference>
<dbReference type="Gene3D" id="3.30.40.10">
    <property type="entry name" value="Zinc/RING finger domain, C3HC4 (zinc finger)"/>
    <property type="match status" value="1"/>
</dbReference>
<dbReference type="InterPro" id="IPR034732">
    <property type="entry name" value="EPHD"/>
</dbReference>
<dbReference type="InterPro" id="IPR041972">
    <property type="entry name" value="TCF-20_ePHD"/>
</dbReference>
<dbReference type="InterPro" id="IPR052440">
    <property type="entry name" value="Trans_Reg/Chrom_Remod"/>
</dbReference>
<dbReference type="InterPro" id="IPR001965">
    <property type="entry name" value="Znf_PHD"/>
</dbReference>
<dbReference type="InterPro" id="IPR013083">
    <property type="entry name" value="Znf_RING/FYVE/PHD"/>
</dbReference>
<dbReference type="PANTHER" id="PTHR14955">
    <property type="entry name" value="RETINOIC ACID INDUCED 1/TRANSCRIPTION FACTOR 20"/>
    <property type="match status" value="1"/>
</dbReference>
<dbReference type="PANTHER" id="PTHR14955:SF7">
    <property type="entry name" value="TRANSCRIPTION FACTOR 20"/>
    <property type="match status" value="1"/>
</dbReference>
<dbReference type="Pfam" id="PF13771">
    <property type="entry name" value="zf-HC5HC2H"/>
    <property type="match status" value="1"/>
</dbReference>
<dbReference type="SMART" id="SM00249">
    <property type="entry name" value="PHD"/>
    <property type="match status" value="1"/>
</dbReference>
<dbReference type="PROSITE" id="PS51805">
    <property type="entry name" value="EPHD"/>
    <property type="match status" value="1"/>
</dbReference>
<comment type="function">
    <text evidence="5">Transcriptional activator that binds to the regulatory region of MMP3 and thereby controls stromelysin expression. It stimulates the activity of various transcriptional activators such as JUN, SP1, PAX6 and ETS1, suggesting a function as a coactivator.</text>
</comment>
<comment type="subunit">
    <text evidence="2 11">Homodimer (Probable). Interacts with RNF4 and JUN (By similarity).</text>
</comment>
<comment type="interaction">
    <interactant intactId="EBI-3444158">
        <id>Q9UGU0</id>
    </interactant>
    <interactant intactId="EBI-308302">
        <id>Q92547</id>
        <label>TOPBP1</label>
    </interactant>
    <organismsDiffer>false</organismsDiffer>
    <experiments>8</experiments>
</comment>
<comment type="subcellular location">
    <subcellularLocation>
        <location evidence="5">Nucleus</location>
    </subcellularLocation>
</comment>
<comment type="alternative products">
    <event type="alternative splicing"/>
    <isoform>
        <id>Q9UGU0-1</id>
        <name>1</name>
        <sequence type="displayed"/>
    </isoform>
    <isoform>
        <id>Q9UGU0-2</id>
        <name>2</name>
        <sequence type="described" ref="VSP_003984 VSP_003985"/>
    </isoform>
</comment>
<comment type="tissue specificity">
    <text evidence="5">Expressed in most tissues, except in ovary and prostate. Isoform 1 is exclusively expressed in brain, heart and testis, and this form predominates in liver and kidney. Isoform 2 predominates in lung.</text>
</comment>
<comment type="domain">
    <text evidence="1">The atypical PHD domain functions as a negative modulator of cofactor binding.</text>
</comment>
<comment type="disease" evidence="6 7 8 9">
    <disease id="DI-05566">
        <name>Developmental delay with variable intellectual impairment and behavioral abnormalities</name>
        <acronym>DDVIBA</acronym>
        <description>An autosomal dominant disorder characterized by impaired intellectual development with speech difficulties, dysmorphic features, and behavioral abnormalities including autism spectrum disorder, attention deficit and hyperactivity. Additional variable features may include hypotonia, somatic overgrowth, macrocephaly, mild distal skeletal anomalies, sleep disturbances, movement disorders, and gastrointestinal issues, such as constipation.</description>
        <dbReference type="MIM" id="618430"/>
    </disease>
    <text>The disease is caused by variants affecting the gene represented in this entry.</text>
</comment>
<comment type="sequence caution" evidence="11">
    <conflict type="frameshift">
        <sequence resource="EMBL-CDS" id="AAC36392"/>
    </conflict>
</comment>
<name>TCF20_HUMAN</name>
<accession>Q9UGU0</accession>
<accession>A9JX12</accession>
<accession>O14528</accession>
<accession>Q13078</accession>
<accession>Q4V353</accession>
<accession>Q9H4M0</accession>
<organism>
    <name type="scientific">Homo sapiens</name>
    <name type="common">Human</name>
    <dbReference type="NCBI Taxonomy" id="9606"/>
    <lineage>
        <taxon>Eukaryota</taxon>
        <taxon>Metazoa</taxon>
        <taxon>Chordata</taxon>
        <taxon>Craniata</taxon>
        <taxon>Vertebrata</taxon>
        <taxon>Euteleostomi</taxon>
        <taxon>Mammalia</taxon>
        <taxon>Eutheria</taxon>
        <taxon>Euarchontoglires</taxon>
        <taxon>Primates</taxon>
        <taxon>Haplorrhini</taxon>
        <taxon>Catarrhini</taxon>
        <taxon>Hominidae</taxon>
        <taxon>Homo</taxon>
    </lineage>
</organism>
<protein>
    <recommendedName>
        <fullName>Transcription factor 20</fullName>
        <shortName>TCF-20</shortName>
    </recommendedName>
    <alternativeName>
        <fullName>Nuclear factor SPBP</fullName>
    </alternativeName>
    <alternativeName>
        <fullName>Protein AR1</fullName>
    </alternativeName>
    <alternativeName>
        <fullName>Stromelysin-1 PDGF-responsive element-binding protein</fullName>
        <shortName>SPRE-binding protein</shortName>
    </alternativeName>
</protein>
<proteinExistence type="evidence at protein level"/>
<reference key="1">
    <citation type="journal article" date="2000" name="J. Biol. Chem.">
        <title>The nuclear factor SPBP contains different functional domains and stimulates the activity of various transcriptional activators.</title>
        <authorList>
            <person name="Rekdal C."/>
            <person name="Sjoettem E."/>
            <person name="Johansen T."/>
        </authorList>
    </citation>
    <scope>NUCLEOTIDE SEQUENCE [GENOMIC DNA] (ISOFORMS 1 AND 2)</scope>
    <scope>FUNCTION</scope>
    <scope>SUBCELLULAR LOCATION</scope>
    <scope>CHARACTERIZATION</scope>
    <scope>ALTERNATIVE SPLICING</scope>
</reference>
<reference key="2">
    <citation type="journal article" date="1999" name="Nature">
        <title>The DNA sequence of human chromosome 22.</title>
        <authorList>
            <person name="Dunham I."/>
            <person name="Hunt A.R."/>
            <person name="Collins J.E."/>
            <person name="Bruskiewich R."/>
            <person name="Beare D.M."/>
            <person name="Clamp M."/>
            <person name="Smink L.J."/>
            <person name="Ainscough R."/>
            <person name="Almeida J.P."/>
            <person name="Babbage A.K."/>
            <person name="Bagguley C."/>
            <person name="Bailey J."/>
            <person name="Barlow K.F."/>
            <person name="Bates K.N."/>
            <person name="Beasley O.P."/>
            <person name="Bird C.P."/>
            <person name="Blakey S.E."/>
            <person name="Bridgeman A.M."/>
            <person name="Buck D."/>
            <person name="Burgess J."/>
            <person name="Burrill W.D."/>
            <person name="Burton J."/>
            <person name="Carder C."/>
            <person name="Carter N.P."/>
            <person name="Chen Y."/>
            <person name="Clark G."/>
            <person name="Clegg S.M."/>
            <person name="Cobley V.E."/>
            <person name="Cole C.G."/>
            <person name="Collier R.E."/>
            <person name="Connor R."/>
            <person name="Conroy D."/>
            <person name="Corby N.R."/>
            <person name="Coville G.J."/>
            <person name="Cox A.V."/>
            <person name="Davis J."/>
            <person name="Dawson E."/>
            <person name="Dhami P.D."/>
            <person name="Dockree C."/>
            <person name="Dodsworth S.J."/>
            <person name="Durbin R.M."/>
            <person name="Ellington A.G."/>
            <person name="Evans K.L."/>
            <person name="Fey J.M."/>
            <person name="Fleming K."/>
            <person name="French L."/>
            <person name="Garner A.A."/>
            <person name="Gilbert J.G.R."/>
            <person name="Goward M.E."/>
            <person name="Grafham D.V."/>
            <person name="Griffiths M.N.D."/>
            <person name="Hall C."/>
            <person name="Hall R.E."/>
            <person name="Hall-Tamlyn G."/>
            <person name="Heathcott R.W."/>
            <person name="Ho S."/>
            <person name="Holmes S."/>
            <person name="Hunt S.E."/>
            <person name="Jones M.C."/>
            <person name="Kershaw J."/>
            <person name="Kimberley A.M."/>
            <person name="King A."/>
            <person name="Laird G.K."/>
            <person name="Langford C.F."/>
            <person name="Leversha M.A."/>
            <person name="Lloyd C."/>
            <person name="Lloyd D.M."/>
            <person name="Martyn I.D."/>
            <person name="Mashreghi-Mohammadi M."/>
            <person name="Matthews L.H."/>
            <person name="Mccann O.T."/>
            <person name="Mcclay J."/>
            <person name="Mclaren S."/>
            <person name="McMurray A.A."/>
            <person name="Milne S.A."/>
            <person name="Mortimore B.J."/>
            <person name="Odell C.N."/>
            <person name="Pavitt R."/>
            <person name="Pearce A.V."/>
            <person name="Pearson D."/>
            <person name="Phillimore B.J.C.T."/>
            <person name="Phillips S.H."/>
            <person name="Plumb R.W."/>
            <person name="Ramsay H."/>
            <person name="Ramsey Y."/>
            <person name="Rogers L."/>
            <person name="Ross M.T."/>
            <person name="Scott C.E."/>
            <person name="Sehra H.K."/>
            <person name="Skuce C.D."/>
            <person name="Smalley S."/>
            <person name="Smith M.L."/>
            <person name="Soderlund C."/>
            <person name="Spragon L."/>
            <person name="Steward C.A."/>
            <person name="Sulston J.E."/>
            <person name="Swann R.M."/>
            <person name="Vaudin M."/>
            <person name="Wall M."/>
            <person name="Wallis J.M."/>
            <person name="Whiteley M.N."/>
            <person name="Willey D.L."/>
            <person name="Williams L."/>
            <person name="Williams S.A."/>
            <person name="Williamson H."/>
            <person name="Wilmer T.E."/>
            <person name="Wilming L."/>
            <person name="Wright C.L."/>
            <person name="Hubbard T."/>
            <person name="Bentley D.R."/>
            <person name="Beck S."/>
            <person name="Rogers J."/>
            <person name="Shimizu N."/>
            <person name="Minoshima S."/>
            <person name="Kawasaki K."/>
            <person name="Sasaki T."/>
            <person name="Asakawa S."/>
            <person name="Kudoh J."/>
            <person name="Shintani A."/>
            <person name="Shibuya K."/>
            <person name="Yoshizaki Y."/>
            <person name="Aoki N."/>
            <person name="Mitsuyama S."/>
            <person name="Roe B.A."/>
            <person name="Chen F."/>
            <person name="Chu L."/>
            <person name="Crabtree J."/>
            <person name="Deschamps S."/>
            <person name="Do A."/>
            <person name="Do T."/>
            <person name="Dorman A."/>
            <person name="Fang F."/>
            <person name="Fu Y."/>
            <person name="Hu P."/>
            <person name="Hua A."/>
            <person name="Kenton S."/>
            <person name="Lai H."/>
            <person name="Lao H.I."/>
            <person name="Lewis J."/>
            <person name="Lewis S."/>
            <person name="Lin S.-P."/>
            <person name="Loh P."/>
            <person name="Malaj E."/>
            <person name="Nguyen T."/>
            <person name="Pan H."/>
            <person name="Phan S."/>
            <person name="Qi S."/>
            <person name="Qian Y."/>
            <person name="Ray L."/>
            <person name="Ren Q."/>
            <person name="Shaull S."/>
            <person name="Sloan D."/>
            <person name="Song L."/>
            <person name="Wang Q."/>
            <person name="Wang Y."/>
            <person name="Wang Z."/>
            <person name="White J."/>
            <person name="Willingham D."/>
            <person name="Wu H."/>
            <person name="Yao Z."/>
            <person name="Zhan M."/>
            <person name="Zhang G."/>
            <person name="Chissoe S."/>
            <person name="Murray J."/>
            <person name="Miller N."/>
            <person name="Minx P."/>
            <person name="Fulton R."/>
            <person name="Johnson D."/>
            <person name="Bemis G."/>
            <person name="Bentley D."/>
            <person name="Bradshaw H."/>
            <person name="Bourne S."/>
            <person name="Cordes M."/>
            <person name="Du Z."/>
            <person name="Fulton L."/>
            <person name="Goela D."/>
            <person name="Graves T."/>
            <person name="Hawkins J."/>
            <person name="Hinds K."/>
            <person name="Kemp K."/>
            <person name="Latreille P."/>
            <person name="Layman D."/>
            <person name="Ozersky P."/>
            <person name="Rohlfing T."/>
            <person name="Scheet P."/>
            <person name="Walker C."/>
            <person name="Wamsley A."/>
            <person name="Wohldmann P."/>
            <person name="Pepin K."/>
            <person name="Nelson J."/>
            <person name="Korf I."/>
            <person name="Bedell J.A."/>
            <person name="Hillier L.W."/>
            <person name="Mardis E."/>
            <person name="Waterston R."/>
            <person name="Wilson R."/>
            <person name="Emanuel B.S."/>
            <person name="Shaikh T."/>
            <person name="Kurahashi H."/>
            <person name="Saitta S."/>
            <person name="Budarf M.L."/>
            <person name="McDermid H.E."/>
            <person name="Johnson A."/>
            <person name="Wong A.C.C."/>
            <person name="Morrow B.E."/>
            <person name="Edelmann L."/>
            <person name="Kim U.J."/>
            <person name="Shizuya H."/>
            <person name="Simon M.I."/>
            <person name="Dumanski J.P."/>
            <person name="Peyrard M."/>
            <person name="Kedra D."/>
            <person name="Seroussi E."/>
            <person name="Fransson I."/>
            <person name="Tapia I."/>
            <person name="Bruder C.E."/>
            <person name="O'Brien K.P."/>
            <person name="Wilkinson P."/>
            <person name="Bodenteich A."/>
            <person name="Hartman K."/>
            <person name="Hu X."/>
            <person name="Khan A.S."/>
            <person name="Lane L."/>
            <person name="Tilahun Y."/>
            <person name="Wright H."/>
        </authorList>
    </citation>
    <scope>NUCLEOTIDE SEQUENCE [LARGE SCALE GENOMIC DNA]</scope>
</reference>
<reference key="3">
    <citation type="submission" date="2005-07" db="EMBL/GenBank/DDBJ databases">
        <authorList>
            <person name="Mural R.J."/>
            <person name="Istrail S."/>
            <person name="Sutton G.G."/>
            <person name="Florea L."/>
            <person name="Halpern A.L."/>
            <person name="Mobarry C.M."/>
            <person name="Lippert R."/>
            <person name="Walenz B."/>
            <person name="Shatkay H."/>
            <person name="Dew I."/>
            <person name="Miller J.R."/>
            <person name="Flanigan M.J."/>
            <person name="Edwards N.J."/>
            <person name="Bolanos R."/>
            <person name="Fasulo D."/>
            <person name="Halldorsson B.V."/>
            <person name="Hannenhalli S."/>
            <person name="Turner R."/>
            <person name="Yooseph S."/>
            <person name="Lu F."/>
            <person name="Nusskern D.R."/>
            <person name="Shue B.C."/>
            <person name="Zheng X.H."/>
            <person name="Zhong F."/>
            <person name="Delcher A.L."/>
            <person name="Huson D.H."/>
            <person name="Kravitz S.A."/>
            <person name="Mouchard L."/>
            <person name="Reinert K."/>
            <person name="Remington K.A."/>
            <person name="Clark A.G."/>
            <person name="Waterman M.S."/>
            <person name="Eichler E.E."/>
            <person name="Adams M.D."/>
            <person name="Hunkapiller M.W."/>
            <person name="Myers E.W."/>
            <person name="Venter J.C."/>
        </authorList>
    </citation>
    <scope>NUCLEOTIDE SEQUENCE [LARGE SCALE GENOMIC DNA]</scope>
</reference>
<reference key="4">
    <citation type="journal article" date="1997" name="DNA Res.">
        <title>Construction and characterization of human brain cDNA libraries suitable for analysis of cDNA clones encoding relatively large proteins.</title>
        <authorList>
            <person name="Ohara O."/>
            <person name="Nagase T."/>
            <person name="Ishikawa K."/>
            <person name="Nakajima D."/>
            <person name="Ohira M."/>
            <person name="Seki N."/>
            <person name="Nomura N."/>
        </authorList>
    </citation>
    <scope>NUCLEOTIDE SEQUENCE [LARGE SCALE MRNA] OF 245-1960 (ISOFORM 1)</scope>
    <source>
        <tissue>Brain</tissue>
    </source>
</reference>
<reference key="5">
    <citation type="journal article" date="1998" name="Cytogenet. Cell Genet.">
        <title>Assignment of AR1, transcription factor 20 (TCF20), to human chromosome 22q13.3 with somatic cell hybrids and in situ hybridization.</title>
        <authorList>
            <person name="Rajadhyaksha A."/>
            <person name="Riviere M."/>
            <person name="Van Vooren P."/>
            <person name="Szpirer J."/>
            <person name="Szpirer C."/>
            <person name="Babin J."/>
            <person name="Bina M."/>
        </authorList>
    </citation>
    <scope>NUCLEOTIDE SEQUENCE [MRNA] OF 1083-1938 (ISOFORM 2)</scope>
</reference>
<reference key="6">
    <citation type="journal article" date="2008" name="Proc. Natl. Acad. Sci. U.S.A.">
        <title>A quantitative atlas of mitotic phosphorylation.</title>
        <authorList>
            <person name="Dephoure N."/>
            <person name="Zhou C."/>
            <person name="Villen J."/>
            <person name="Beausoleil S.A."/>
            <person name="Bakalarski C.E."/>
            <person name="Elledge S.J."/>
            <person name="Gygi S.P."/>
        </authorList>
    </citation>
    <scope>PHOSPHORYLATION [LARGE SCALE ANALYSIS] AT SER-430; SER-574; SER-583; SER-871; SER-1335; SER-1361; SER-1522; SER-1669 AND THR-1671</scope>
    <scope>IDENTIFICATION BY MASS SPECTROMETRY [LARGE SCALE ANALYSIS]</scope>
    <source>
        <tissue>Cervix carcinoma</tissue>
    </source>
</reference>
<reference key="7">
    <citation type="journal article" date="2009" name="Anal. Chem.">
        <title>Lys-N and trypsin cover complementary parts of the phosphoproteome in a refined SCX-based approach.</title>
        <authorList>
            <person name="Gauci S."/>
            <person name="Helbig A.O."/>
            <person name="Slijper M."/>
            <person name="Krijgsveld J."/>
            <person name="Heck A.J."/>
            <person name="Mohammed S."/>
        </authorList>
    </citation>
    <scope>IDENTIFICATION BY MASS SPECTROMETRY [LARGE SCALE ANALYSIS]</scope>
</reference>
<reference key="8">
    <citation type="journal article" date="2009" name="Sci. Signal.">
        <title>Quantitative phosphoproteomic analysis of T cell receptor signaling reveals system-wide modulation of protein-protein interactions.</title>
        <authorList>
            <person name="Mayya V."/>
            <person name="Lundgren D.H."/>
            <person name="Hwang S.-I."/>
            <person name="Rezaul K."/>
            <person name="Wu L."/>
            <person name="Eng J.K."/>
            <person name="Rodionov V."/>
            <person name="Han D.K."/>
        </authorList>
    </citation>
    <scope>PHOSPHORYLATION [LARGE SCALE ANALYSIS] AT SER-419</scope>
    <scope>IDENTIFICATION BY MASS SPECTROMETRY [LARGE SCALE ANALYSIS]</scope>
    <source>
        <tissue>Leukemic T-cell</tissue>
    </source>
</reference>
<reference key="9">
    <citation type="journal article" date="2010" name="Sci. Signal.">
        <title>Quantitative phosphoproteomics reveals widespread full phosphorylation site occupancy during mitosis.</title>
        <authorList>
            <person name="Olsen J.V."/>
            <person name="Vermeulen M."/>
            <person name="Santamaria A."/>
            <person name="Kumar C."/>
            <person name="Miller M.L."/>
            <person name="Jensen L.J."/>
            <person name="Gnad F."/>
            <person name="Cox J."/>
            <person name="Jensen T.S."/>
            <person name="Nigg E.A."/>
            <person name="Brunak S."/>
            <person name="Mann M."/>
        </authorList>
    </citation>
    <scope>PHOSPHORYLATION [LARGE SCALE ANALYSIS] AT SER-871; SER-966; SER-1053; SER-1522 AND THR-1671</scope>
    <scope>IDENTIFICATION BY MASS SPECTROMETRY [LARGE SCALE ANALYSIS]</scope>
    <source>
        <tissue>Cervix carcinoma</tissue>
    </source>
</reference>
<reference key="10">
    <citation type="journal article" date="2011" name="Sci. Signal.">
        <title>System-wide temporal characterization of the proteome and phosphoproteome of human embryonic stem cell differentiation.</title>
        <authorList>
            <person name="Rigbolt K.T."/>
            <person name="Prokhorova T.A."/>
            <person name="Akimov V."/>
            <person name="Henningsen J."/>
            <person name="Johansen P.T."/>
            <person name="Kratchmarova I."/>
            <person name="Kassem M."/>
            <person name="Mann M."/>
            <person name="Olsen J.V."/>
            <person name="Blagoev B."/>
        </authorList>
    </citation>
    <scope>PHOSPHORYLATION [LARGE SCALE ANALYSIS] AT SER-1522 AND THR-1671</scope>
    <scope>IDENTIFICATION BY MASS SPECTROMETRY [LARGE SCALE ANALYSIS]</scope>
</reference>
<reference key="11">
    <citation type="journal article" date="2013" name="J. Proteome Res.">
        <title>Toward a comprehensive characterization of a human cancer cell phosphoproteome.</title>
        <authorList>
            <person name="Zhou H."/>
            <person name="Di Palma S."/>
            <person name="Preisinger C."/>
            <person name="Peng M."/>
            <person name="Polat A.N."/>
            <person name="Heck A.J."/>
            <person name="Mohammed S."/>
        </authorList>
    </citation>
    <scope>PHOSPHORYLATION [LARGE SCALE ANALYSIS] AT SER-538; SER-559; SER-574; SER-583; SER-640; SER-871; SER-1005; SER-1305; SER-1522 AND THR-1671</scope>
    <scope>IDENTIFICATION BY MASS SPECTROMETRY [LARGE SCALE ANALYSIS]</scope>
    <source>
        <tissue>Cervix carcinoma</tissue>
        <tissue>Erythroleukemia</tissue>
    </source>
</reference>
<reference key="12">
    <citation type="journal article" date="2014" name="Mol. Cell. Proteomics">
        <title>Immunoaffinity enrichment and mass spectrometry analysis of protein methylation.</title>
        <authorList>
            <person name="Guo A."/>
            <person name="Gu H."/>
            <person name="Zhou J."/>
            <person name="Mulhern D."/>
            <person name="Wang Y."/>
            <person name="Lee K.A."/>
            <person name="Yang V."/>
            <person name="Aguiar M."/>
            <person name="Kornhauser J."/>
            <person name="Jia X."/>
            <person name="Ren J."/>
            <person name="Beausoleil S.A."/>
            <person name="Silva J.C."/>
            <person name="Vemulapalli V."/>
            <person name="Bedford M.T."/>
            <person name="Comb M.J."/>
        </authorList>
    </citation>
    <scope>METHYLATION [LARGE SCALE ANALYSIS] AT ARG-60 AND ARG-1024</scope>
    <scope>IDENTIFICATION BY MASS SPECTROMETRY [LARGE SCALE ANALYSIS]</scope>
    <source>
        <tissue>Colon carcinoma</tissue>
    </source>
</reference>
<reference key="13">
    <citation type="journal article" date="2014" name="Nat. Struct. Mol. Biol.">
        <title>Uncovering global SUMOylation signaling networks in a site-specific manner.</title>
        <authorList>
            <person name="Hendriks I.A."/>
            <person name="D'Souza R.C."/>
            <person name="Yang B."/>
            <person name="Verlaan-de Vries M."/>
            <person name="Mann M."/>
            <person name="Vertegaal A.C."/>
        </authorList>
    </citation>
    <scope>SUMOYLATION [LARGE SCALE ANALYSIS] AT LYS-823; LYS-844; LYS-929 AND LYS-1446</scope>
    <scope>IDENTIFICATION BY MASS SPECTROMETRY [LARGE SCALE ANALYSIS]</scope>
</reference>
<reference key="14">
    <citation type="journal article" date="2014" name="Proc. Natl. Acad. Sci. U.S.A.">
        <title>Mapping of SUMO sites and analysis of SUMOylation changes induced by external stimuli.</title>
        <authorList>
            <person name="Impens F."/>
            <person name="Radoshevich L."/>
            <person name="Cossart P."/>
            <person name="Ribet D."/>
        </authorList>
    </citation>
    <scope>SUMOYLATION [LARGE SCALE ANALYSIS] AT LYS-929</scope>
    <scope>IDENTIFICATION BY MASS SPECTROMETRY [LARGE SCALE ANALYSIS]</scope>
</reference>
<reference key="15">
    <citation type="journal article" date="2015" name="Cell Rep.">
        <title>SUMO-2 orchestrates chromatin modifiers in response to DNA damage.</title>
        <authorList>
            <person name="Hendriks I.A."/>
            <person name="Treffers L.W."/>
            <person name="Verlaan-de Vries M."/>
            <person name="Olsen J.V."/>
            <person name="Vertegaal A.C."/>
        </authorList>
    </citation>
    <scope>SUMOYLATION [LARGE SCALE ANALYSIS] AT LYS-710; LYS-844; LYS-929 AND LYS-1446</scope>
    <scope>IDENTIFICATION BY MASS SPECTROMETRY [LARGE SCALE ANALYSIS]</scope>
</reference>
<reference key="16">
    <citation type="journal article" date="2015" name="Mol. Cell. Proteomics">
        <title>System-wide analysis of SUMOylation dynamics in response to replication stress reveals novel small ubiquitin-like modified target proteins and acceptor lysines relevant for genome stability.</title>
        <authorList>
            <person name="Xiao Z."/>
            <person name="Chang J.G."/>
            <person name="Hendriks I.A."/>
            <person name="Sigurdsson J.O."/>
            <person name="Olsen J.V."/>
            <person name="Vertegaal A.C."/>
        </authorList>
    </citation>
    <scope>SUMOYLATION [LARGE SCALE ANALYSIS] AT LYS-823; LYS-844; LYS-929; LYS-957; LYS-1137 AND LYS-1446</scope>
    <scope>IDENTIFICATION BY MASS SPECTROMETRY [LARGE SCALE ANALYSIS]</scope>
</reference>
<reference key="17">
    <citation type="journal article" date="2017" name="Nat. Struct. Mol. Biol.">
        <title>Site-specific mapping of the human SUMO proteome reveals co-modification with phosphorylation.</title>
        <authorList>
            <person name="Hendriks I.A."/>
            <person name="Lyon D."/>
            <person name="Young C."/>
            <person name="Jensen L.J."/>
            <person name="Vertegaal A.C."/>
            <person name="Nielsen M.L."/>
        </authorList>
    </citation>
    <scope>SUMOYLATION [LARGE SCALE ANALYSIS] AT LYS-304; LYS-710; LYS-733; LYS-748; LYS-823; LYS-832; LYS-844; LYS-920; LYS-922; LYS-929; LYS-957; LYS-1015; LYS-1086; LYS-1098; LYS-1173; LYS-1178; LYS-1183; LYS-1210; LYS-1231; LYS-1267; LYS-1274; LYS-1309; LYS-1338; LYS-1389; LYS-1409; LYS-1428; LYS-1446; LYS-1510; LYS-1524 AND LYS-1613</scope>
    <scope>IDENTIFICATION BY MASS SPECTROMETRY [LARGE SCALE ANALYSIS]</scope>
</reference>
<reference key="18">
    <citation type="journal article" date="2014" name="J. Med. Genet.">
        <title>De novo and rare inherited mutations implicate the transcriptional coregulator TCF20/SPBP in autism spectrum disorder.</title>
        <authorList>
            <consortium name="International Molecular Genetic Study of Autism Consortium (IMGSAC)"/>
            <person name="Babbs C."/>
            <person name="Lloyd D."/>
            <person name="Pagnamenta A.T."/>
            <person name="Twigg S.R."/>
            <person name="Green J."/>
            <person name="McGowan S.J."/>
            <person name="Mirza G."/>
            <person name="Naples R."/>
            <person name="Sharma V.P."/>
            <person name="Volpi E.V."/>
            <person name="Buckle V.J."/>
            <person name="Wall S.A."/>
            <person name="Knight S.J."/>
            <person name="Parr J.R."/>
            <person name="Wilkie A.O."/>
        </authorList>
    </citation>
    <scope>INVOLVEMENT IN DDVIBA</scope>
    <scope>VARIANTS DDVIBA GLU-512; LEU-1557; LEU-1937 AND HIS-1942</scope>
    <scope>VARIANTS THR-16; GLN-322 DEL; VAL-405; GLY-722 AND ILE-1165</scope>
</reference>
<reference key="19">
    <citation type="journal article" date="2016" name="Eur. J. Hum. Genet.">
        <title>De novo nonsense and frameshift variants of TCF20 in individuals with intellectual disability and postnatal overgrowth.</title>
        <authorList>
            <person name="Schaefgen J."/>
            <person name="Cremer K."/>
            <person name="Becker J."/>
            <person name="Wieland T."/>
            <person name="Zink A.M."/>
            <person name="Kim S."/>
            <person name="Windheuser I.C."/>
            <person name="Kreiss M."/>
            <person name="Aretz S."/>
            <person name="Strom T.M."/>
            <person name="Wieczorek D."/>
            <person name="Engels H."/>
        </authorList>
    </citation>
    <scope>INVOLVEMENT IN DDVIBA</scope>
    <scope>VARIANT DDVIBA 319-GLN--GLY-1960 DEL</scope>
</reference>
<reference key="20">
    <citation type="journal article" date="2019" name="Genome Med.">
        <title>De novo and inherited TCF20 pathogenic variants are associated with intellectual disability, dysmorphic features, hypotonia, and neurological impairments with similarities to Smith-Magenis syndrome.</title>
        <authorList>
            <consortium name="DDD study"/>
            <person name="Vetrini F."/>
            <person name="McKee S."/>
            <person name="Rosenfeld J.A."/>
            <person name="Suri M."/>
            <person name="Lewis A.M."/>
            <person name="Nugent K.M."/>
            <person name="Roeder E."/>
            <person name="Littlejohn R.O."/>
            <person name="Holder S."/>
            <person name="Zhu W."/>
            <person name="Alaimo J.T."/>
            <person name="Graham B."/>
            <person name="Harris J.M."/>
            <person name="Gibson J.B."/>
            <person name="Pastore M."/>
            <person name="McBride K.L."/>
            <person name="Komara M."/>
            <person name="Al-Gazali L."/>
            <person name="Al Shamsi A."/>
            <person name="Fanning E.A."/>
            <person name="Wierenga K.J."/>
            <person name="Scott D.A."/>
            <person name="Ben-Neriah Z."/>
            <person name="Meiner V."/>
            <person name="Cassuto H."/>
            <person name="Elpeleg O."/>
            <person name="Holder J.L. Jr."/>
            <person name="Burrage L.C."/>
            <person name="Seaver L.H."/>
            <person name="Van Maldergem L."/>
            <person name="Mahida S."/>
            <person name="Soul J.S."/>
            <person name="Marlatt M."/>
            <person name="Matyakhina L."/>
            <person name="Vogt J."/>
            <person name="Gold J.A."/>
            <person name="Park S.M."/>
            <person name="Varghese V."/>
            <person name="Lampe A.K."/>
            <person name="Kumar A."/>
            <person name="Lees M."/>
            <person name="Holder-Espinasse M."/>
            <person name="McConnell V."/>
            <person name="Bernhard B."/>
            <person name="Blair E."/>
            <person name="Harrison V."/>
            <person name="Muzny D.M."/>
            <person name="Gibbs R.A."/>
            <person name="Elsea S.H."/>
            <person name="Posey J.E."/>
            <person name="Bi W."/>
            <person name="Lalani S."/>
            <person name="Xia F."/>
            <person name="Yang Y."/>
            <person name="Eng C.M."/>
            <person name="Lupski J.R."/>
            <person name="Liu P."/>
        </authorList>
    </citation>
    <scope>VARIANTS DDVIBA 330-GLN--GLY-1960 DEL; 754-GLN--GLY-1960 DEL; 1009-TYR--GLY-1960 DEL; 1269-GLN--GLY-1960 DEL; ARG-1710 AND 1907-ARG--GLY-1960 DEL</scope>
</reference>
<reference key="21">
    <citation type="journal article" date="2019" name="Genet. Med.">
        <title>Variants in TCF20 in neurodevelopmental disability: description of 27 new patients and review of literature.</title>
        <authorList>
            <person name="Torti E."/>
            <person name="Keren B."/>
            <person name="Palmer E.E."/>
            <person name="Zhu Z."/>
            <person name="Afenjar A."/>
            <person name="Anderson I.J."/>
            <person name="Andrews M.V."/>
            <person name="Atkinson C."/>
            <person name="Au M."/>
            <person name="Berry S.A."/>
            <person name="Bowling K.M."/>
            <person name="Boyle J."/>
            <person name="Buratti J."/>
            <person name="Cathey S.S."/>
            <person name="Charles P."/>
            <person name="Cogne B."/>
            <person name="Courtin T."/>
            <person name="Escobar L.F."/>
            <person name="Finley S.L."/>
            <person name="Graham J.M. Jr."/>
            <person name="Grange D.K."/>
            <person name="Heron D."/>
            <person name="Hewson S."/>
            <person name="Hiatt S.M."/>
            <person name="Hibbs K.A."/>
            <person name="Jayakar P."/>
            <person name="Kalsner L."/>
            <person name="Larcher L."/>
            <person name="Lesca G."/>
            <person name="Mark P.R."/>
            <person name="Miller K."/>
            <person name="Nava C."/>
            <person name="Nizon M."/>
            <person name="Pai G.S."/>
            <person name="Pappas J."/>
            <person name="Parsons G."/>
            <person name="Payne K."/>
            <person name="Putoux A."/>
            <person name="Rabin R."/>
            <person name="Sabatier I."/>
            <person name="Shinawi M."/>
            <person name="Shur N."/>
            <person name="Skinner S.A."/>
            <person name="Valence S."/>
            <person name="Warren H."/>
            <person name="Whalen S."/>
            <person name="Crunk A."/>
            <person name="Douglas G."/>
            <person name="Monaghan K.G."/>
            <person name="Person R.E."/>
            <person name="Willaert R."/>
            <person name="Solomon B.D."/>
            <person name="Juusola J."/>
        </authorList>
    </citation>
    <scope>VARIANTS DDVIBA 233-GLN--GLY-1960 DEL; 654-GLN--GLY-1960 DEL; 719-ARG--GLY-1960 DEL; 742-ARG--GLY-1960 DEL; 865-SER--GLY-1960 DEL; 961-TYR--GLY-1960 DEL; 1592-GLN--GLY-1960 DEL; 1596-ARG--GLY-1960 DEL AND TYR-1909</scope>
</reference>
<gene>
    <name type="primary">TCF20</name>
    <name type="synonym">KIAA0292</name>
    <name type="synonym">SPBP</name>
</gene>
<feature type="chain" id="PRO_0000072448" description="Transcription factor 20">
    <location>
        <begin position="1"/>
        <end position="1960"/>
    </location>
</feature>
<feature type="DNA-binding region" description="A.T hook">
    <location>
        <begin position="1537"/>
        <end position="1551"/>
    </location>
</feature>
<feature type="zinc finger region" description="C2HC pre-PHD-type; degenerate" evidence="3">
    <location>
        <begin position="1829"/>
        <end position="1865"/>
    </location>
</feature>
<feature type="zinc finger region" description="PHD-type" evidence="3">
    <location>
        <begin position="1885"/>
        <end position="1933"/>
    </location>
</feature>
<feature type="region of interest" description="Disordered" evidence="4">
    <location>
        <begin position="1"/>
        <end position="287"/>
    </location>
</feature>
<feature type="region of interest" description="Disordered" evidence="4">
    <location>
        <begin position="305"/>
        <end position="328"/>
    </location>
</feature>
<feature type="region of interest" description="Disordered" evidence="4">
    <location>
        <begin position="360"/>
        <end position="392"/>
    </location>
</feature>
<feature type="region of interest" description="Disordered" evidence="4">
    <location>
        <begin position="476"/>
        <end position="748"/>
    </location>
</feature>
<feature type="region of interest" description="Disordered" evidence="4">
    <location>
        <begin position="920"/>
        <end position="1037"/>
    </location>
</feature>
<feature type="region of interest" description="Disordered" evidence="4">
    <location>
        <begin position="1110"/>
        <end position="1142"/>
    </location>
</feature>
<feature type="region of interest" description="Disordered" evidence="4">
    <location>
        <begin position="1162"/>
        <end position="1285"/>
    </location>
</feature>
<feature type="region of interest" description="Leucine-zipper">
    <location>
        <begin position="1170"/>
        <end position="1191"/>
    </location>
</feature>
<feature type="region of interest" description="Disordered" evidence="4">
    <location>
        <begin position="1303"/>
        <end position="1331"/>
    </location>
</feature>
<feature type="region of interest" description="Disordered" evidence="4">
    <location>
        <begin position="1384"/>
        <end position="1607"/>
    </location>
</feature>
<feature type="region of interest" description="Disordered" evidence="4">
    <location>
        <begin position="1660"/>
        <end position="1683"/>
    </location>
</feature>
<feature type="region of interest" description="Disordered" evidence="4">
    <location>
        <begin position="1732"/>
        <end position="1839"/>
    </location>
</feature>
<feature type="region of interest" description="Disordered" evidence="4">
    <location>
        <begin position="1939"/>
        <end position="1960"/>
    </location>
</feature>
<feature type="short sequence motif" description="Nuclear localization signal" evidence="1">
    <location>
        <begin position="1254"/>
        <end position="1268"/>
    </location>
</feature>
<feature type="short sequence motif" description="Nuclear localization signal" evidence="1">
    <location>
        <begin position="1576"/>
        <end position="1600"/>
    </location>
</feature>
<feature type="short sequence motif" description="Nuclear localization signal" evidence="1">
    <location>
        <begin position="1785"/>
        <end position="1792"/>
    </location>
</feature>
<feature type="compositionally biased region" description="Polar residues" evidence="4">
    <location>
        <begin position="1"/>
        <end position="18"/>
    </location>
</feature>
<feature type="compositionally biased region" description="Gly residues" evidence="4">
    <location>
        <begin position="42"/>
        <end position="60"/>
    </location>
</feature>
<feature type="compositionally biased region" description="Low complexity" evidence="4">
    <location>
        <begin position="61"/>
        <end position="75"/>
    </location>
</feature>
<feature type="compositionally biased region" description="Polar residues" evidence="4">
    <location>
        <begin position="122"/>
        <end position="131"/>
    </location>
</feature>
<feature type="compositionally biased region" description="Low complexity" evidence="4">
    <location>
        <begin position="164"/>
        <end position="192"/>
    </location>
</feature>
<feature type="compositionally biased region" description="Polar residues" evidence="4">
    <location>
        <begin position="193"/>
        <end position="219"/>
    </location>
</feature>
<feature type="compositionally biased region" description="Low complexity" evidence="4">
    <location>
        <begin position="236"/>
        <end position="259"/>
    </location>
</feature>
<feature type="compositionally biased region" description="Polar residues" evidence="4">
    <location>
        <begin position="260"/>
        <end position="270"/>
    </location>
</feature>
<feature type="compositionally biased region" description="Polar residues" evidence="4">
    <location>
        <begin position="277"/>
        <end position="287"/>
    </location>
</feature>
<feature type="compositionally biased region" description="Low complexity" evidence="4">
    <location>
        <begin position="306"/>
        <end position="322"/>
    </location>
</feature>
<feature type="compositionally biased region" description="Low complexity" evidence="4">
    <location>
        <begin position="368"/>
        <end position="388"/>
    </location>
</feature>
<feature type="compositionally biased region" description="Polar residues" evidence="4">
    <location>
        <begin position="497"/>
        <end position="508"/>
    </location>
</feature>
<feature type="compositionally biased region" description="Polar residues" evidence="4">
    <location>
        <begin position="537"/>
        <end position="547"/>
    </location>
</feature>
<feature type="compositionally biased region" description="Basic and acidic residues" evidence="4">
    <location>
        <begin position="616"/>
        <end position="628"/>
    </location>
</feature>
<feature type="compositionally biased region" description="Low complexity" evidence="4">
    <location>
        <begin position="665"/>
        <end position="677"/>
    </location>
</feature>
<feature type="compositionally biased region" description="Polar residues" evidence="4">
    <location>
        <begin position="693"/>
        <end position="702"/>
    </location>
</feature>
<feature type="compositionally biased region" description="Basic and acidic residues" evidence="4">
    <location>
        <begin position="732"/>
        <end position="748"/>
    </location>
</feature>
<feature type="compositionally biased region" description="Polar residues" evidence="4">
    <location>
        <begin position="936"/>
        <end position="945"/>
    </location>
</feature>
<feature type="compositionally biased region" description="Basic and acidic residues" evidence="4">
    <location>
        <begin position="946"/>
        <end position="961"/>
    </location>
</feature>
<feature type="compositionally biased region" description="Basic and acidic residues" evidence="4">
    <location>
        <begin position="1130"/>
        <end position="1142"/>
    </location>
</feature>
<feature type="compositionally biased region" description="Basic and acidic residues" evidence="4">
    <location>
        <begin position="1304"/>
        <end position="1318"/>
    </location>
</feature>
<feature type="compositionally biased region" description="Basic and acidic residues" evidence="4">
    <location>
        <begin position="1424"/>
        <end position="1451"/>
    </location>
</feature>
<feature type="compositionally biased region" description="Polar residues" evidence="4">
    <location>
        <begin position="1464"/>
        <end position="1477"/>
    </location>
</feature>
<feature type="compositionally biased region" description="Pro residues" evidence="4">
    <location>
        <begin position="1555"/>
        <end position="1566"/>
    </location>
</feature>
<feature type="compositionally biased region" description="Basic residues" evidence="4">
    <location>
        <begin position="1578"/>
        <end position="1599"/>
    </location>
</feature>
<feature type="compositionally biased region" description="Polar residues" evidence="4">
    <location>
        <begin position="1944"/>
        <end position="1960"/>
    </location>
</feature>
<feature type="modified residue" description="Omega-N-methylarginine" evidence="17">
    <location>
        <position position="60"/>
    </location>
</feature>
<feature type="modified residue" description="Phosphoserine" evidence="13">
    <location>
        <position position="419"/>
    </location>
</feature>
<feature type="modified residue" description="Phosphoserine" evidence="12">
    <location>
        <position position="430"/>
    </location>
</feature>
<feature type="modified residue" description="Phosphoserine" evidence="16">
    <location>
        <position position="538"/>
    </location>
</feature>
<feature type="modified residue" description="Phosphoserine" evidence="16">
    <location>
        <position position="559"/>
    </location>
</feature>
<feature type="modified residue" description="Phosphoserine" evidence="12 16">
    <location>
        <position position="574"/>
    </location>
</feature>
<feature type="modified residue" description="Phosphoserine" evidence="12 16">
    <location>
        <position position="583"/>
    </location>
</feature>
<feature type="modified residue" description="N6-acetyllysine" evidence="2">
    <location>
        <position position="602"/>
    </location>
</feature>
<feature type="modified residue" description="Phosphoserine" evidence="16">
    <location>
        <position position="640"/>
    </location>
</feature>
<feature type="modified residue" description="Phosphoserine" evidence="12 14 16">
    <location>
        <position position="871"/>
    </location>
</feature>
<feature type="modified residue" description="Phosphoserine" evidence="14">
    <location>
        <position position="966"/>
    </location>
</feature>
<feature type="modified residue" description="Phosphoserine" evidence="16">
    <location>
        <position position="1005"/>
    </location>
</feature>
<feature type="modified residue" description="Omega-N-methylarginine" evidence="17">
    <location>
        <position position="1024"/>
    </location>
</feature>
<feature type="modified residue" description="Phosphoserine" evidence="14">
    <location>
        <position position="1053"/>
    </location>
</feature>
<feature type="modified residue" description="Phosphoserine" evidence="16">
    <location>
        <position position="1305"/>
    </location>
</feature>
<feature type="modified residue" description="Phosphoserine" evidence="12">
    <location>
        <position position="1335"/>
    </location>
</feature>
<feature type="modified residue" description="Phosphoserine" evidence="12">
    <location>
        <position position="1361"/>
    </location>
</feature>
<feature type="modified residue" description="Phosphoserine" evidence="12 14 15 16">
    <location>
        <position position="1522"/>
    </location>
</feature>
<feature type="modified residue" description="Phosphoserine" evidence="12">
    <location>
        <position position="1669"/>
    </location>
</feature>
<feature type="modified residue" description="Phosphothreonine" evidence="12 14 15 16">
    <location>
        <position position="1671"/>
    </location>
</feature>
<feature type="modified residue" description="Phosphothreonine" evidence="2">
    <location>
        <position position="1762"/>
    </location>
</feature>
<feature type="modified residue" description="Phosphothreonine" evidence="2">
    <location>
        <position position="1764"/>
    </location>
</feature>
<feature type="cross-link" description="Glycyl lysine isopeptide (Lys-Gly) (interchain with G-Cter in SUMO2)" evidence="22">
    <location>
        <position position="304"/>
    </location>
</feature>
<feature type="cross-link" description="Glycyl lysine isopeptide (Lys-Gly) (interchain with G-Cter in SUMO2)" evidence="21 22">
    <location>
        <position position="710"/>
    </location>
</feature>
<feature type="cross-link" description="Glycyl lysine isopeptide (Lys-Gly) (interchain with G-Cter in SUMO2)" evidence="22">
    <location>
        <position position="733"/>
    </location>
</feature>
<feature type="cross-link" description="Glycyl lysine isopeptide (Lys-Gly) (interchain with G-Cter in SUMO2)" evidence="22">
    <location>
        <position position="748"/>
    </location>
</feature>
<feature type="cross-link" description="Glycyl lysine isopeptide (Lys-Gly) (interchain with G-Cter in SUMO2)" evidence="19 20 22">
    <location>
        <position position="823"/>
    </location>
</feature>
<feature type="cross-link" description="Glycyl lysine isopeptide (Lys-Gly) (interchain with G-Cter in SUMO2)" evidence="22">
    <location>
        <position position="832"/>
    </location>
</feature>
<feature type="cross-link" description="Glycyl lysine isopeptide (Lys-Gly) (interchain with G-Cter in SUMO2)" evidence="19 20 21 22">
    <location>
        <position position="844"/>
    </location>
</feature>
<feature type="cross-link" description="Glycyl lysine isopeptide (Lys-Gly) (interchain with G-Cter in SUMO2)" evidence="22">
    <location>
        <position position="920"/>
    </location>
</feature>
<feature type="cross-link" description="Glycyl lysine isopeptide (Lys-Gly) (interchain with G-Cter in SUMO2)" evidence="22">
    <location>
        <position position="922"/>
    </location>
</feature>
<feature type="cross-link" description="Glycyl lysine isopeptide (Lys-Gly) (interchain with G-Cter in SUMO1); alternate" evidence="18">
    <location>
        <position position="929"/>
    </location>
</feature>
<feature type="cross-link" description="Glycyl lysine isopeptide (Lys-Gly) (interchain with G-Cter in SUMO2); alternate" evidence="18 19 20 21 22">
    <location>
        <position position="929"/>
    </location>
</feature>
<feature type="cross-link" description="Glycyl lysine isopeptide (Lys-Gly) (interchain with G-Cter in SUMO2)" evidence="20 22">
    <location>
        <position position="957"/>
    </location>
</feature>
<feature type="cross-link" description="Glycyl lysine isopeptide (Lys-Gly) (interchain with G-Cter in SUMO2)" evidence="22">
    <location>
        <position position="1015"/>
    </location>
</feature>
<feature type="cross-link" description="Glycyl lysine isopeptide (Lys-Gly) (interchain with G-Cter in SUMO2)" evidence="22">
    <location>
        <position position="1086"/>
    </location>
</feature>
<feature type="cross-link" description="Glycyl lysine isopeptide (Lys-Gly) (interchain with G-Cter in SUMO2)" evidence="22">
    <location>
        <position position="1098"/>
    </location>
</feature>
<feature type="cross-link" description="Glycyl lysine isopeptide (Lys-Gly) (interchain with G-Cter in SUMO2)" evidence="20">
    <location>
        <position position="1137"/>
    </location>
</feature>
<feature type="cross-link" description="Glycyl lysine isopeptide (Lys-Gly) (interchain with G-Cter in SUMO2)" evidence="22">
    <location>
        <position position="1173"/>
    </location>
</feature>
<feature type="cross-link" description="Glycyl lysine isopeptide (Lys-Gly) (interchain with G-Cter in SUMO2)" evidence="22">
    <location>
        <position position="1178"/>
    </location>
</feature>
<feature type="cross-link" description="Glycyl lysine isopeptide (Lys-Gly) (interchain with G-Cter in SUMO2)" evidence="22">
    <location>
        <position position="1183"/>
    </location>
</feature>
<feature type="cross-link" description="Glycyl lysine isopeptide (Lys-Gly) (interchain with G-Cter in SUMO2)" evidence="22">
    <location>
        <position position="1210"/>
    </location>
</feature>
<feature type="cross-link" description="Glycyl lysine isopeptide (Lys-Gly) (interchain with G-Cter in SUMO2)" evidence="22">
    <location>
        <position position="1231"/>
    </location>
</feature>
<feature type="cross-link" description="Glycyl lysine isopeptide (Lys-Gly) (interchain with G-Cter in SUMO2)" evidence="22">
    <location>
        <position position="1267"/>
    </location>
</feature>
<feature type="cross-link" description="Glycyl lysine isopeptide (Lys-Gly) (interchain with G-Cter in SUMO2)" evidence="22">
    <location>
        <position position="1274"/>
    </location>
</feature>
<feature type="cross-link" description="Glycyl lysine isopeptide (Lys-Gly) (interchain with G-Cter in SUMO2)" evidence="22">
    <location>
        <position position="1309"/>
    </location>
</feature>
<feature type="cross-link" description="Glycyl lysine isopeptide (Lys-Gly) (interchain with G-Cter in SUMO2)" evidence="22">
    <location>
        <position position="1338"/>
    </location>
</feature>
<feature type="cross-link" description="Glycyl lysine isopeptide (Lys-Gly) (interchain with G-Cter in SUMO2)" evidence="22">
    <location>
        <position position="1389"/>
    </location>
</feature>
<feature type="cross-link" description="Glycyl lysine isopeptide (Lys-Gly) (interchain with G-Cter in SUMO2)" evidence="22">
    <location>
        <position position="1409"/>
    </location>
</feature>
<feature type="cross-link" description="Glycyl lysine isopeptide (Lys-Gly) (interchain with G-Cter in SUMO2)" evidence="22">
    <location>
        <position position="1428"/>
    </location>
</feature>
<feature type="cross-link" description="Glycyl lysine isopeptide (Lys-Gly) (interchain with G-Cter in SUMO2)" evidence="19 20 21 22">
    <location>
        <position position="1446"/>
    </location>
</feature>
<feature type="cross-link" description="Glycyl lysine isopeptide (Lys-Gly) (interchain with G-Cter in SUMO2)" evidence="22">
    <location>
        <position position="1510"/>
    </location>
</feature>
<feature type="cross-link" description="Glycyl lysine isopeptide (Lys-Gly) (interchain with G-Cter in SUMO2)" evidence="22">
    <location>
        <position position="1524"/>
    </location>
</feature>
<feature type="cross-link" description="Glycyl lysine isopeptide (Lys-Gly) (interchain with G-Cter in SUMO2)" evidence="22">
    <location>
        <position position="1613"/>
    </location>
</feature>
<feature type="splice variant" id="VSP_003984" description="In isoform 2." evidence="10">
    <original>PPLPC</original>
    <variation>VRLWR</variation>
    <location>
        <begin position="1934"/>
        <end position="1938"/>
    </location>
</feature>
<feature type="splice variant" id="VSP_003985" description="In isoform 2." evidence="10">
    <location>
        <begin position="1939"/>
        <end position="1960"/>
    </location>
</feature>
<feature type="sequence variant" id="VAR_082677" evidence="6">
    <original>S</original>
    <variation>T</variation>
    <location>
        <position position="16"/>
    </location>
</feature>
<feature type="sequence variant" id="VAR_082678" description="In DDVIBA." evidence="8">
    <location>
        <begin position="233"/>
        <end position="1960"/>
    </location>
</feature>
<feature type="sequence variant" id="VAR_082679" description="In DDVIBA." evidence="7">
    <location>
        <begin position="319"/>
        <end position="1960"/>
    </location>
</feature>
<feature type="sequence variant" id="VAR_082680" evidence="6">
    <location>
        <position position="322"/>
    </location>
</feature>
<feature type="sequence variant" id="VAR_082681" description="In DDVIBA." evidence="9">
    <location>
        <begin position="330"/>
        <end position="1960"/>
    </location>
</feature>
<feature type="sequence variant" id="VAR_051419" description="In dbSNP:rs34030679." evidence="6">
    <original>M</original>
    <variation>V</variation>
    <location>
        <position position="405"/>
    </location>
</feature>
<feature type="sequence variant" id="VAR_025427" description="In dbSNP:rs6002656.">
    <original>T</original>
    <variation>N</variation>
    <location>
        <position position="485"/>
    </location>
</feature>
<feature type="sequence variant" id="VAR_082682" description="In DDVIBA; uncertain significance." evidence="6">
    <original>K</original>
    <variation>E</variation>
    <location>
        <position position="512"/>
    </location>
</feature>
<feature type="sequence variant" id="VAR_082683" description="In DDVIBA." evidence="8">
    <location>
        <begin position="654"/>
        <end position="1960"/>
    </location>
</feature>
<feature type="sequence variant" id="VAR_082684" description="In DDVIBA." evidence="8">
    <location>
        <begin position="719"/>
        <end position="1960"/>
    </location>
</feature>
<feature type="sequence variant" id="VAR_025428" description="In dbSNP:rs5758651." evidence="6">
    <original>S</original>
    <variation>G</variation>
    <location>
        <position position="722"/>
    </location>
</feature>
<feature type="sequence variant" id="VAR_082685" description="In DDVIBA." evidence="8">
    <location>
        <begin position="742"/>
        <end position="1960"/>
    </location>
</feature>
<feature type="sequence variant" id="VAR_082686" description="In DDVIBA." evidence="9">
    <location>
        <begin position="754"/>
        <end position="1960"/>
    </location>
</feature>
<feature type="sequence variant" id="VAR_082687" description="In DDVIBA." evidence="8">
    <location>
        <begin position="865"/>
        <end position="1960"/>
    </location>
</feature>
<feature type="sequence variant" id="VAR_082688" description="In DDVIBA." evidence="8">
    <location>
        <begin position="961"/>
        <end position="1960"/>
    </location>
</feature>
<feature type="sequence variant" id="VAR_082689" description="In DDVIBA." evidence="9">
    <location>
        <begin position="1009"/>
        <end position="1960"/>
    </location>
</feature>
<feature type="sequence variant" id="VAR_025429" description="In dbSNP:rs17002890." evidence="6">
    <original>M</original>
    <variation>I</variation>
    <location>
        <position position="1165"/>
    </location>
</feature>
<feature type="sequence variant" id="VAR_082690" description="In DDVIBA." evidence="9">
    <location>
        <begin position="1269"/>
        <end position="1960"/>
    </location>
</feature>
<feature type="sequence variant" id="VAR_025430" description="In dbSNP:rs17002888.">
    <original>S</original>
    <variation>N</variation>
    <location>
        <position position="1325"/>
    </location>
</feature>
<feature type="sequence variant" id="VAR_082691" description="In DDVIBA; uncertain significance." evidence="6">
    <original>P</original>
    <variation>L</variation>
    <location>
        <position position="1557"/>
    </location>
</feature>
<feature type="sequence variant" id="VAR_082692" description="In DDVIBA." evidence="8">
    <location>
        <begin position="1592"/>
        <end position="1960"/>
    </location>
</feature>
<feature type="sequence variant" id="VAR_082693" description="In DDVIBA." evidence="8">
    <location>
        <begin position="1596"/>
        <end position="1960"/>
    </location>
</feature>
<feature type="sequence variant" id="VAR_082694" description="In DDVIBA; uncertain significance." evidence="9">
    <original>K</original>
    <variation>R</variation>
    <location>
        <position position="1710"/>
    </location>
</feature>
<feature type="sequence variant" id="VAR_082695" description="In DDVIBA." evidence="9">
    <location>
        <begin position="1907"/>
        <end position="1960"/>
    </location>
</feature>
<feature type="sequence variant" id="VAR_082696" description="In DDVIBA." evidence="8">
    <original>H</original>
    <variation>Y</variation>
    <location>
        <position position="1909"/>
    </location>
</feature>
<feature type="sequence variant" id="VAR_051420" description="In dbSNP:rs17002865.">
    <original>Y</original>
    <variation>C</variation>
    <location>
        <position position="1910"/>
    </location>
</feature>
<feature type="sequence variant" id="VAR_082697" description="In DDVIBA; uncertain significance." evidence="6">
    <original>P</original>
    <variation>L</variation>
    <location>
        <position position="1937"/>
    </location>
</feature>
<feature type="sequence variant" id="VAR_082698" description="In DDVIBA; uncertain significance." evidence="6">
    <original>P</original>
    <variation>H</variation>
    <location>
        <position position="1942"/>
    </location>
</feature>
<feature type="sequence conflict" description="In Ref. 1." evidence="11" ref="1">
    <original>Q</original>
    <variation>R</variation>
    <location>
        <position position="122"/>
    </location>
</feature>
<feature type="sequence conflict" description="In Ref. 1." evidence="11" ref="1">
    <original>Q</original>
    <variation>K</variation>
    <location>
        <position position="200"/>
    </location>
</feature>
<evidence type="ECO:0000250" key="1"/>
<evidence type="ECO:0000250" key="2">
    <source>
        <dbReference type="UniProtKB" id="Q9EPQ8"/>
    </source>
</evidence>
<evidence type="ECO:0000255" key="3">
    <source>
        <dbReference type="PROSITE-ProRule" id="PRU01146"/>
    </source>
</evidence>
<evidence type="ECO:0000256" key="4">
    <source>
        <dbReference type="SAM" id="MobiDB-lite"/>
    </source>
</evidence>
<evidence type="ECO:0000269" key="5">
    <source>
    </source>
</evidence>
<evidence type="ECO:0000269" key="6">
    <source>
    </source>
</evidence>
<evidence type="ECO:0000269" key="7">
    <source>
    </source>
</evidence>
<evidence type="ECO:0000269" key="8">
    <source>
    </source>
</evidence>
<evidence type="ECO:0000269" key="9">
    <source>
    </source>
</evidence>
<evidence type="ECO:0000303" key="10">
    <source>
    </source>
</evidence>
<evidence type="ECO:0000305" key="11"/>
<evidence type="ECO:0007744" key="12">
    <source>
    </source>
</evidence>
<evidence type="ECO:0007744" key="13">
    <source>
    </source>
</evidence>
<evidence type="ECO:0007744" key="14">
    <source>
    </source>
</evidence>
<evidence type="ECO:0007744" key="15">
    <source>
    </source>
</evidence>
<evidence type="ECO:0007744" key="16">
    <source>
    </source>
</evidence>
<evidence type="ECO:0007744" key="17">
    <source>
    </source>
</evidence>
<evidence type="ECO:0007744" key="18">
    <source>
    </source>
</evidence>
<evidence type="ECO:0007744" key="19">
    <source>
    </source>
</evidence>
<evidence type="ECO:0007744" key="20">
    <source>
    </source>
</evidence>
<evidence type="ECO:0007744" key="21">
    <source>
    </source>
</evidence>
<evidence type="ECO:0007744" key="22">
    <source>
    </source>
</evidence>
<keyword id="KW-0007">Acetylation</keyword>
<keyword id="KW-0010">Activator</keyword>
<keyword id="KW-0025">Alternative splicing</keyword>
<keyword id="KW-0225">Disease variant</keyword>
<keyword id="KW-0238">DNA-binding</keyword>
<keyword id="KW-0991">Intellectual disability</keyword>
<keyword id="KW-1017">Isopeptide bond</keyword>
<keyword id="KW-0479">Metal-binding</keyword>
<keyword id="KW-0488">Methylation</keyword>
<keyword id="KW-0539">Nucleus</keyword>
<keyword id="KW-0597">Phosphoprotein</keyword>
<keyword id="KW-1267">Proteomics identification</keyword>
<keyword id="KW-1185">Reference proteome</keyword>
<keyword id="KW-0804">Transcription</keyword>
<keyword id="KW-0805">Transcription regulation</keyword>
<keyword id="KW-0832">Ubl conjugation</keyword>
<keyword id="KW-0862">Zinc</keyword>
<keyword id="KW-0863">Zinc-finger</keyword>
<sequence length="1960" mass="211771">MQSFREQSSYHGNQQSYPQEVHGSSRLEEFSPRQAQMFQNFGGTGGSSGSSGSGSGGGRRGAAAAAAAMASETSGHQGYQGFRKEAGDFYYMAGNKDPVTTGTPQPPQRRPSGPVQSYGPPQGSSFGNQYGSEGHVGQFQAQHSGLGGVSHYQQDYTGPFSPGSAQYQQQASSQQQQQQVQQLRQQLYQSHQPLPQATGQPASSSSHLQPMQRPSTLPSSAAGYQLRVGQFGQHYQSSASSSSSSSFPSPQRFSQSGQSYDGSYNVNAGSQYEGHNVGSNAQAYGTQSNYSYQPQSMKNFEQAKIPQGTQQGQQQQQPQQQQHPSQHVMQYTNAATKLPLQSQVGQYNQPEVPVRSPMQFHQNFSPISNPSPAASVVQSPSCSSTPSPLMQTGENLQCGQGSVPMGSRNRILQLMPQLSPTPSMMPSPNSHAAGFKGFGLEGVPEKRLTDPGLSSLSALSTQVANLPNTVQHMLLSDALTPQKKTSKRPSSSKKADSCTNSEGSSQPEEQLKSPMAESLDGGCSSSSEDQGERVRQLSGQSTSSDTTYKGGASEKAGSSPAQGAQNEPPRLNASPAAREEATSPGAKDMPLSSDGNPKVNEKTVGVIVSREAMTGRVEKPGGQDKGSQEDDPAATQRPPSNGGAKETSHASLPQPEPPGGGGSKGNKNGDNNSNHNGEGNGQSGHSAAGPGFTSRTEPSKSPGSLRYSYKDSFGSAVPRNVSGFPQYPTGQEKGDFTGHGERKGRNEKFPSLLQEVLQGYHHHPDRRYSRSTQEHQGMAGSLEGTTRPNVLVSQTNELASRGLLNKSIGSLLENPHWGPWERKSSSTAPEMKQINLTDYPIPRKFEIEPQSSAHEPGGSLSERRSVICDISPLRQIVRDPGAHSLGHMSADTRIGRNDRLNPTLSQSVILPGGLVSMETKLKSQSGQIKEEDFEQSKSQASFNNKKSGDHCHPPSIKHESYRGNASPGAATHDSLSDYGPQDSRPTPMRRVPGRVGGREGMRGRSPSQYHDFAEKLKMSPGRSRGPGGDPHHMNPHMTFSERANRSSLHTPFSPNSETLASAYHANTRAHAYGDPNAGLNSQLHYKRQMYQQQPEEYKDWSSGSAQGVIAAAQHRQEGPRKSPRQQQFLDRVRSPLKNDKDGMMYGPPVGTYHDPSAQEAGRCLMSSDGLPNKGMELKHGSQKLQESCWDLSRQTSPAKSSGPPGMSSQKRYGPPHETDGHGLAEATQSSKPGSVMLRLPGQEDHSSQNPLIMRRRVRSFISPIPSKRQSQDVKNSSTEDKGRLLHSSKEGADKAFNSYAHLSHSQDIKSIPKRDSSKDLPSPDSRNCPAVTLTSPAKTKILPPRKGRGLKLEAIVQKITSPNIRRSASSNSAEAGGDTVTLDDILSLKSGPPEGGSVAVQDADIEKRKGEVASDLVSPANQELHVEKPLPRSSEEWRGSVDDKVKTETHAETVTAGKEPPGAMTSTTSQKPGSNQGRPDGSLGGTAPLIFPDSKNVPPVGILAPEANPKAEEKENDTVTISPKQEGFPPKGYFPSGKKKGRPIGSVNKQKKQQQPPPPPPQPPQIPEGSADGEPKPKKQRQRRERRKPGAQPRKRKTKQAVPIVEPQEPEIKLKYATQPLDKTDAKNKSFYPYIHVVNKCELGAVCTIINAEEEEQTKLVRGRKGQRSLTPPPSSTESKALPASSFMLQGPVVTESSVMGHLVCCLCGKWASYRNMGDLFGPFYPQDYAATLPKNPPPKRATEMQSKVKVRHKSASNGSKTDTEEEEEQQQQQKEQRSLAAHPRFKRRHRSEDCGGGPRSLSRGLPCKKAATEGSSEKTVLDSKPSVPTTSEGGPELELQIPELPLDSNEFWVHEGCILWANGIYLVCGRLYGLQEALEIAREMKCSHCQEAGATLGCYNKGCSFRYHYPCAIDADCLLHEENFSVRCPKHKPPLPCPLPPLQNKTAKGSLSTEQSERG</sequence>